<feature type="signal peptide" evidence="1">
    <location>
        <begin position="1"/>
        <end position="24"/>
    </location>
</feature>
<feature type="chain" id="PRO_0000304622" description="Immunoglobulin superfamily DCC subclass member 4">
    <location>
        <begin position="25"/>
        <end position="1250"/>
    </location>
</feature>
<feature type="topological domain" description="Extracellular" evidence="1">
    <location>
        <begin position="25"/>
        <end position="957"/>
    </location>
</feature>
<feature type="transmembrane region" description="Helical" evidence="1">
    <location>
        <begin position="958"/>
        <end position="978"/>
    </location>
</feature>
<feature type="topological domain" description="Cytoplasmic" evidence="1">
    <location>
        <begin position="979"/>
        <end position="1250"/>
    </location>
</feature>
<feature type="domain" description="Ig-like C2-type 1">
    <location>
        <begin position="29"/>
        <end position="137"/>
    </location>
</feature>
<feature type="domain" description="Ig-like C2-type 2">
    <location>
        <begin position="143"/>
        <end position="229"/>
    </location>
</feature>
<feature type="domain" description="Ig-like C2-type 3">
    <location>
        <begin position="242"/>
        <end position="330"/>
    </location>
</feature>
<feature type="domain" description="Ig-like C2-type 4">
    <location>
        <begin position="335"/>
        <end position="421"/>
    </location>
</feature>
<feature type="domain" description="Fibronectin type-III 1" evidence="3">
    <location>
        <begin position="431"/>
        <end position="525"/>
    </location>
</feature>
<feature type="domain" description="Fibronectin type-III 2" evidence="3">
    <location>
        <begin position="527"/>
        <end position="623"/>
    </location>
</feature>
<feature type="domain" description="Fibronectin type-III 3" evidence="3">
    <location>
        <begin position="632"/>
        <end position="741"/>
    </location>
</feature>
<feature type="domain" description="Fibronectin type-III 4" evidence="3">
    <location>
        <begin position="752"/>
        <end position="845"/>
    </location>
</feature>
<feature type="domain" description="Fibronectin type-III 5" evidence="3">
    <location>
        <begin position="850"/>
        <end position="945"/>
    </location>
</feature>
<feature type="region of interest" description="Disordered" evidence="4">
    <location>
        <begin position="1140"/>
        <end position="1175"/>
    </location>
</feature>
<feature type="region of interest" description="Disordered" evidence="4">
    <location>
        <begin position="1215"/>
        <end position="1250"/>
    </location>
</feature>
<feature type="modified residue" description="Phosphothreonine" evidence="7">
    <location>
        <position position="995"/>
    </location>
</feature>
<feature type="glycosylation site" description="N-linked (GlcNAc...) asparagine" evidence="1">
    <location>
        <position position="90"/>
    </location>
</feature>
<feature type="glycosylation site" description="N-linked (GlcNAc...) asparagine" evidence="1">
    <location>
        <position position="102"/>
    </location>
</feature>
<feature type="glycosylation site" description="N-linked (GlcNAc...) asparagine" evidence="1">
    <location>
        <position position="157"/>
    </location>
</feature>
<feature type="glycosylation site" description="N-linked (GlcNAc...) asparagine" evidence="1">
    <location>
        <position position="252"/>
    </location>
</feature>
<feature type="glycosylation site" description="N-linked (GlcNAc...) asparagine" evidence="1">
    <location>
        <position position="582"/>
    </location>
</feature>
<feature type="disulfide bond" evidence="2">
    <location>
        <begin position="57"/>
        <end position="121"/>
    </location>
</feature>
<feature type="disulfide bond" evidence="2">
    <location>
        <begin position="164"/>
        <end position="212"/>
    </location>
</feature>
<feature type="disulfide bond" evidence="2">
    <location>
        <begin position="265"/>
        <end position="312"/>
    </location>
</feature>
<feature type="disulfide bond" evidence="2">
    <location>
        <begin position="356"/>
        <end position="405"/>
    </location>
</feature>
<feature type="splice variant" id="VSP_028046" description="In isoform 2." evidence="5">
    <original>MARGDAGRGRGLLALTFCLLAARGELLLPQETTVELSCGVGPLQVILGPEQAAVLNCSLGAAAAGPPTRVTWSKDGDTLLEHDHLHLLPNGSLWLSQPLAPNGSDESVPEAVGVIEGNYSCLAHGPLGVLASQTAVVKLATLADFSLHPESQTVEENGTARFECHIEGLPAPIITWEKDQVTLPEEPRLIVLPNGVLQILDVQESDAGPYRCVATNSARQHFSQEALLSVAHRGSLASTRGQDVVIVAAPENTTVVSGQSVVMECVASADPTPFVSWVRQDGKPISTDVIVLGRTNLLIANAQPWHSGVYVCRANKPRTRDFATAAAELRV</original>
    <variation>MGRRKGRSALSRSSLERVNQGEVKVIGRGAREGGGGQAWGTGGGGRDLSCGIPRSASPLAP</variation>
    <location>
        <begin position="1"/>
        <end position="331"/>
    </location>
</feature>
<feature type="sequence variant" id="VAR_049966" description="In dbSNP:rs34355056.">
    <original>A</original>
    <variation>P</variation>
    <location>
        <position position="52"/>
    </location>
</feature>
<feature type="sequence variant" id="VAR_049967" description="In dbSNP:rs12442757.">
    <original>N</original>
    <variation>S</variation>
    <location>
        <position position="301"/>
    </location>
</feature>
<feature type="sequence variant" id="VAR_059391" description="In dbSNP:rs1469778.">
    <original>S</original>
    <variation>C</variation>
    <location>
        <position position="803"/>
    </location>
</feature>
<feature type="sequence variant" id="VAR_049968" description="In dbSNP:rs33918653.">
    <original>T</original>
    <variation>A</variation>
    <location>
        <position position="1102"/>
    </location>
</feature>
<feature type="sequence variant" id="VAR_049969" description="In dbSNP:rs33918653.">
    <original>C</original>
    <variation>Y</variation>
    <location>
        <position position="1125"/>
    </location>
</feature>
<evidence type="ECO:0000255" key="1"/>
<evidence type="ECO:0000255" key="2">
    <source>
        <dbReference type="PROSITE-ProRule" id="PRU00114"/>
    </source>
</evidence>
<evidence type="ECO:0000255" key="3">
    <source>
        <dbReference type="PROSITE-ProRule" id="PRU00316"/>
    </source>
</evidence>
<evidence type="ECO:0000256" key="4">
    <source>
        <dbReference type="SAM" id="MobiDB-lite"/>
    </source>
</evidence>
<evidence type="ECO:0000303" key="5">
    <source>
    </source>
</evidence>
<evidence type="ECO:0000305" key="6"/>
<evidence type="ECO:0007744" key="7">
    <source>
    </source>
</evidence>
<accession>Q8TDY8</accession>
<accession>Q9HCE4</accession>
<keyword id="KW-0025">Alternative splicing</keyword>
<keyword id="KW-1003">Cell membrane</keyword>
<keyword id="KW-1015">Disulfide bond</keyword>
<keyword id="KW-0325">Glycoprotein</keyword>
<keyword id="KW-0393">Immunoglobulin domain</keyword>
<keyword id="KW-0472">Membrane</keyword>
<keyword id="KW-0597">Phosphoprotein</keyword>
<keyword id="KW-1267">Proteomics identification</keyword>
<keyword id="KW-1185">Reference proteome</keyword>
<keyword id="KW-0677">Repeat</keyword>
<keyword id="KW-0732">Signal</keyword>
<keyword id="KW-0812">Transmembrane</keyword>
<keyword id="KW-1133">Transmembrane helix</keyword>
<dbReference type="EMBL" id="AB052622">
    <property type="protein sequence ID" value="BAB86306.1"/>
    <property type="molecule type" value="mRNA"/>
</dbReference>
<dbReference type="EMBL" id="AB046848">
    <property type="protein sequence ID" value="BAB13454.1"/>
    <property type="molecule type" value="mRNA"/>
</dbReference>
<dbReference type="CCDS" id="CCDS10206.1">
    <molecule id="Q8TDY8-1"/>
</dbReference>
<dbReference type="RefSeq" id="NP_066013.1">
    <molecule id="Q8TDY8-1"/>
    <property type="nucleotide sequence ID" value="NM_020962.3"/>
</dbReference>
<dbReference type="SMR" id="Q8TDY8"/>
<dbReference type="BioGRID" id="121745">
    <property type="interactions" value="40"/>
</dbReference>
<dbReference type="FunCoup" id="Q8TDY8">
    <property type="interactions" value="202"/>
</dbReference>
<dbReference type="IntAct" id="Q8TDY8">
    <property type="interactions" value="32"/>
</dbReference>
<dbReference type="STRING" id="9606.ENSP00000319623"/>
<dbReference type="GlyConnect" id="1944">
    <property type="glycosylation" value="11 N-Linked glycans (6 sites)"/>
</dbReference>
<dbReference type="GlyCosmos" id="Q8TDY8">
    <property type="glycosylation" value="9 sites, 12 glycans"/>
</dbReference>
<dbReference type="GlyGen" id="Q8TDY8">
    <property type="glycosylation" value="11 sites, 15 N-linked glycans (7 sites)"/>
</dbReference>
<dbReference type="iPTMnet" id="Q8TDY8"/>
<dbReference type="PhosphoSitePlus" id="Q8TDY8"/>
<dbReference type="BioMuta" id="IGDCC4"/>
<dbReference type="DMDM" id="74760490"/>
<dbReference type="jPOST" id="Q8TDY8"/>
<dbReference type="MassIVE" id="Q8TDY8"/>
<dbReference type="PaxDb" id="9606-ENSP00000319623"/>
<dbReference type="PeptideAtlas" id="Q8TDY8"/>
<dbReference type="ProteomicsDB" id="74374">
    <molecule id="Q8TDY8-1"/>
</dbReference>
<dbReference type="ProteomicsDB" id="74375">
    <molecule id="Q8TDY8-2"/>
</dbReference>
<dbReference type="Antibodypedia" id="2317">
    <property type="antibodies" value="69 antibodies from 13 providers"/>
</dbReference>
<dbReference type="DNASU" id="57722"/>
<dbReference type="Ensembl" id="ENST00000352385.3">
    <molecule id="Q8TDY8-1"/>
    <property type="protein sequence ID" value="ENSP00000319623.3"/>
    <property type="gene ID" value="ENSG00000103742.12"/>
</dbReference>
<dbReference type="GeneID" id="57722"/>
<dbReference type="KEGG" id="hsa:57722"/>
<dbReference type="MANE-Select" id="ENST00000352385.3">
    <property type="protein sequence ID" value="ENSP00000319623.3"/>
    <property type="RefSeq nucleotide sequence ID" value="NM_020962.3"/>
    <property type="RefSeq protein sequence ID" value="NP_066013.1"/>
</dbReference>
<dbReference type="UCSC" id="uc002aou.2">
    <molecule id="Q8TDY8-1"/>
    <property type="organism name" value="human"/>
</dbReference>
<dbReference type="AGR" id="HGNC:13770"/>
<dbReference type="CTD" id="57722"/>
<dbReference type="DisGeNET" id="57722"/>
<dbReference type="GeneCards" id="IGDCC4"/>
<dbReference type="HGNC" id="HGNC:13770">
    <property type="gene designation" value="IGDCC4"/>
</dbReference>
<dbReference type="HPA" id="ENSG00000103742">
    <property type="expression patterns" value="Tissue enhanced (skeletal muscle, tongue)"/>
</dbReference>
<dbReference type="neXtProt" id="NX_Q8TDY8"/>
<dbReference type="OpenTargets" id="ENSG00000103742"/>
<dbReference type="PharmGKB" id="PA164720914"/>
<dbReference type="VEuPathDB" id="HostDB:ENSG00000103742"/>
<dbReference type="eggNOG" id="KOG4221">
    <property type="taxonomic scope" value="Eukaryota"/>
</dbReference>
<dbReference type="GeneTree" id="ENSGT00940000159637"/>
<dbReference type="HOGENOM" id="CLU_006906_0_0_1"/>
<dbReference type="InParanoid" id="Q8TDY8"/>
<dbReference type="OMA" id="LHWCPPS"/>
<dbReference type="OrthoDB" id="6266590at2759"/>
<dbReference type="PAN-GO" id="Q8TDY8">
    <property type="GO annotations" value="1 GO annotation based on evolutionary models"/>
</dbReference>
<dbReference type="PhylomeDB" id="Q8TDY8"/>
<dbReference type="TreeFam" id="TF321506"/>
<dbReference type="PathwayCommons" id="Q8TDY8"/>
<dbReference type="SignaLink" id="Q8TDY8"/>
<dbReference type="BioGRID-ORCS" id="57722">
    <property type="hits" value="14 hits in 1147 CRISPR screens"/>
</dbReference>
<dbReference type="ChiTaRS" id="IGDCC4">
    <property type="organism name" value="human"/>
</dbReference>
<dbReference type="GenomeRNAi" id="57722"/>
<dbReference type="Pharos" id="Q8TDY8">
    <property type="development level" value="Tbio"/>
</dbReference>
<dbReference type="PRO" id="PR:Q8TDY8"/>
<dbReference type="Proteomes" id="UP000005640">
    <property type="component" value="Chromosome 15"/>
</dbReference>
<dbReference type="RNAct" id="Q8TDY8">
    <property type="molecule type" value="protein"/>
</dbReference>
<dbReference type="Bgee" id="ENSG00000103742">
    <property type="expression patterns" value="Expressed in corpus epididymis and 158 other cell types or tissues"/>
</dbReference>
<dbReference type="GO" id="GO:0005886">
    <property type="term" value="C:plasma membrane"/>
    <property type="evidence" value="ECO:0007669"/>
    <property type="project" value="UniProtKB-SubCell"/>
</dbReference>
<dbReference type="GO" id="GO:0098609">
    <property type="term" value="P:cell-cell adhesion"/>
    <property type="evidence" value="ECO:0000318"/>
    <property type="project" value="GO_Central"/>
</dbReference>
<dbReference type="CDD" id="cd00063">
    <property type="entry name" value="FN3"/>
    <property type="match status" value="5"/>
</dbReference>
<dbReference type="CDD" id="cd00096">
    <property type="entry name" value="Ig"/>
    <property type="match status" value="1"/>
</dbReference>
<dbReference type="FunFam" id="2.60.40.10:FF:000273">
    <property type="entry name" value="contactin-3 isoform X1"/>
    <property type="match status" value="1"/>
</dbReference>
<dbReference type="FunFam" id="2.60.40.10:FF:000759">
    <property type="entry name" value="Immunoglobulin superfamily DCC subclass member 4"/>
    <property type="match status" value="1"/>
</dbReference>
<dbReference type="FunFam" id="2.60.40.10:FF:001038">
    <property type="entry name" value="Immunoglobulin superfamily DCC subclass member 4"/>
    <property type="match status" value="1"/>
</dbReference>
<dbReference type="FunFam" id="2.60.40.10:FF:001275">
    <property type="entry name" value="Immunoglobulin superfamily DCC subclass member 4"/>
    <property type="match status" value="1"/>
</dbReference>
<dbReference type="FunFam" id="2.60.40.10:FF:001755">
    <property type="entry name" value="Immunoglobulin superfamily DCC subclass member 4"/>
    <property type="match status" value="1"/>
</dbReference>
<dbReference type="FunFam" id="2.60.40.10:FF:000455">
    <property type="entry name" value="Protogenin A"/>
    <property type="match status" value="1"/>
</dbReference>
<dbReference type="FunFam" id="2.60.40.10:FF:000551">
    <property type="entry name" value="Protogenin A"/>
    <property type="match status" value="1"/>
</dbReference>
<dbReference type="FunFam" id="2.60.40.10:FF:000299">
    <property type="entry name" value="protogenin isoform X2"/>
    <property type="match status" value="1"/>
</dbReference>
<dbReference type="FunFam" id="2.60.40.10:FF:000456">
    <property type="entry name" value="protogenin isoform X2"/>
    <property type="match status" value="1"/>
</dbReference>
<dbReference type="Gene3D" id="2.60.40.10">
    <property type="entry name" value="Immunoglobulins"/>
    <property type="match status" value="9"/>
</dbReference>
<dbReference type="InterPro" id="IPR003961">
    <property type="entry name" value="FN3_dom"/>
</dbReference>
<dbReference type="InterPro" id="IPR036116">
    <property type="entry name" value="FN3_sf"/>
</dbReference>
<dbReference type="InterPro" id="IPR007110">
    <property type="entry name" value="Ig-like_dom"/>
</dbReference>
<dbReference type="InterPro" id="IPR036179">
    <property type="entry name" value="Ig-like_dom_sf"/>
</dbReference>
<dbReference type="InterPro" id="IPR013783">
    <property type="entry name" value="Ig-like_fold"/>
</dbReference>
<dbReference type="InterPro" id="IPR013098">
    <property type="entry name" value="Ig_I-set"/>
</dbReference>
<dbReference type="InterPro" id="IPR003599">
    <property type="entry name" value="Ig_sub"/>
</dbReference>
<dbReference type="InterPro" id="IPR003598">
    <property type="entry name" value="Ig_sub2"/>
</dbReference>
<dbReference type="PANTHER" id="PTHR44170:SF5">
    <property type="entry name" value="IMMUNOGLOBULIN SUPERFAMILY DCC SUBCLASS MEMBER 4"/>
    <property type="match status" value="1"/>
</dbReference>
<dbReference type="PANTHER" id="PTHR44170">
    <property type="entry name" value="PROTEIN SIDEKICK"/>
    <property type="match status" value="1"/>
</dbReference>
<dbReference type="Pfam" id="PF00041">
    <property type="entry name" value="fn3"/>
    <property type="match status" value="5"/>
</dbReference>
<dbReference type="Pfam" id="PF07679">
    <property type="entry name" value="I-set"/>
    <property type="match status" value="2"/>
</dbReference>
<dbReference type="Pfam" id="PF13927">
    <property type="entry name" value="Ig_3"/>
    <property type="match status" value="1"/>
</dbReference>
<dbReference type="SMART" id="SM00060">
    <property type="entry name" value="FN3"/>
    <property type="match status" value="5"/>
</dbReference>
<dbReference type="SMART" id="SM00409">
    <property type="entry name" value="IG"/>
    <property type="match status" value="4"/>
</dbReference>
<dbReference type="SMART" id="SM00408">
    <property type="entry name" value="IGc2"/>
    <property type="match status" value="4"/>
</dbReference>
<dbReference type="SUPFAM" id="SSF49265">
    <property type="entry name" value="Fibronectin type III"/>
    <property type="match status" value="3"/>
</dbReference>
<dbReference type="SUPFAM" id="SSF48726">
    <property type="entry name" value="Immunoglobulin"/>
    <property type="match status" value="4"/>
</dbReference>
<dbReference type="PROSITE" id="PS50853">
    <property type="entry name" value="FN3"/>
    <property type="match status" value="5"/>
</dbReference>
<dbReference type="PROSITE" id="PS50835">
    <property type="entry name" value="IG_LIKE"/>
    <property type="match status" value="4"/>
</dbReference>
<gene>
    <name type="primary">IGDCC4</name>
    <name type="synonym">DDM36</name>
    <name type="synonym">KIAA1628</name>
    <name type="synonym">NOPE</name>
</gene>
<sequence>MARGDAGRGRGLLALTFCLLAARGELLLPQETTVELSCGVGPLQVILGPEQAAVLNCSLGAAAAGPPTRVTWSKDGDTLLEHDHLHLLPNGSLWLSQPLAPNGSDESVPEAVGVIEGNYSCLAHGPLGVLASQTAVVKLATLADFSLHPESQTVEENGTARFECHIEGLPAPIITWEKDQVTLPEEPRLIVLPNGVLQILDVQESDAGPYRCVATNSARQHFSQEALLSVAHRGSLASTRGQDVVIVAAPENTTVVSGQSVVMECVASADPTPFVSWVRQDGKPISTDVIVLGRTNLLIANAQPWHSGVYVCRANKPRTRDFATAAAELRVLAAPAITQAPEALSRTRASTARFVCRASGEPRPALRWLHNGAPLRPNGRVKVQGGGGSLVITQIGLQDAGYYQCVAENSAGMACAAASLAVVVREGLPSAPTRVTATPLSSSAVLVAWERPEMHSEQIIGFSLHYQKARGMDNVEYQFAVNNDTTELQVRDLEPNTDYEFYVVAYSQLGASRTSTPALVHTLDDVPSAAPQLSLSSPNPSDIRVAWLPLPPSLSNGQVVKYKIEYGLGKEDQIFSTEVRGNETQLMLNSLQPNKVYRVRISAGTAAGFGAPSQWMHHRTPSMHNQSHVPFAPAELKVQAKMESLVVSWQPPPHPTQISGYKLYWREVGAEEEANGDRLPGGRGDQAWDVGPVRLKKKVKQYELTQLVPGRLYEVKLVAFNKHEDGYAAVWKGKTEKAPAPDMPIQRGPPLPPAHVHAESNSSTSIWLRWKKPDFTTVKIVNYTVRFSPWGLRNASLVTYYTSSGEDILIGGLKPFTKYEFAVQSHGVDMDGPFGSVVERSTLPDRPSTPPSDLRLSPLTPSTVRLHWCPPTEPNGEIVEYLILYSSNHTQPEHQWTLLTTQGNIFSAEVHGLESDTRYFFKMGARTEVGPGPFSRLQDVITLQEKLSDSLDMHSVTGIIVGVCLGLLCLLACMCAGLRRSPHRESLPGLSSTATPGNPALYSRARLGPPSPPAAHELESLVHPHPQDWSPPPSDVEDRAEVHSLMGGGVSEGRSHSKRKISWAQPSGLSWAGSWAGCELPQAGPRPALTRALLPPAGTGQTLLLQALVYDAIKGNGRKKSPPACRNQVEAEVIVHSDFSASNGNPDLHLQDLEPEDPLPPEAPDLISGVGDPGQGAAWLDRELGGCELAAPGPDRLTCLPEAASASCSYPDLQPGEVLEETPGDSCQLKSPCPLGASPGLPRSPVSSSA</sequence>
<name>IGDC4_HUMAN</name>
<organism>
    <name type="scientific">Homo sapiens</name>
    <name type="common">Human</name>
    <dbReference type="NCBI Taxonomy" id="9606"/>
    <lineage>
        <taxon>Eukaryota</taxon>
        <taxon>Metazoa</taxon>
        <taxon>Chordata</taxon>
        <taxon>Craniata</taxon>
        <taxon>Vertebrata</taxon>
        <taxon>Euteleostomi</taxon>
        <taxon>Mammalia</taxon>
        <taxon>Eutheria</taxon>
        <taxon>Euarchontoglires</taxon>
        <taxon>Primates</taxon>
        <taxon>Haplorrhini</taxon>
        <taxon>Catarrhini</taxon>
        <taxon>Hominidae</taxon>
        <taxon>Homo</taxon>
    </lineage>
</organism>
<protein>
    <recommendedName>
        <fullName>Immunoglobulin superfamily DCC subclass member 4</fullName>
    </recommendedName>
    <alternativeName>
        <fullName>Neighbor of punc e11</fullName>
    </alternativeName>
    <alternativeName>
        <fullName>Protein DDM36</fullName>
        <shortName>hDDM36</shortName>
    </alternativeName>
</protein>
<proteinExistence type="evidence at protein level"/>
<comment type="subcellular location">
    <subcellularLocation>
        <location evidence="6">Cell membrane</location>
        <topology evidence="6">Single-pass type I membrane protein</topology>
    </subcellularLocation>
</comment>
<comment type="alternative products">
    <event type="alternative splicing"/>
    <isoform>
        <id>Q8TDY8-1</id>
        <name>1</name>
        <sequence type="displayed"/>
    </isoform>
    <isoform>
        <id>Q8TDY8-2</id>
        <name>2</name>
        <sequence type="described" ref="VSP_028046"/>
    </isoform>
</comment>
<comment type="similarity">
    <text evidence="6">Belongs to the immunoglobulin superfamily. DCC family.</text>
</comment>
<reference key="1">
    <citation type="submission" date="2000-12" db="EMBL/GenBank/DDBJ databases">
        <title>Up-regulation of a ras effector and down-regulation of a cell adhesion molecule are associated with transformation of osteoblasts.</title>
        <authorList>
            <person name="Murakami H."/>
            <person name="Nakamata T."/>
            <person name="Nakayama T."/>
            <person name="Yamamoto H."/>
            <person name="Hosaka T."/>
            <person name="Aoyama T."/>
            <person name="Nagayama S."/>
            <person name="Oka M."/>
            <person name="Kiyono T."/>
            <person name="Sasaki M.S."/>
            <person name="Nakamura T."/>
            <person name="Toguchida J."/>
        </authorList>
    </citation>
    <scope>NUCLEOTIDE SEQUENCE [MRNA] (ISOFORM 1)</scope>
</reference>
<reference key="2">
    <citation type="journal article" date="2000" name="DNA Res.">
        <title>Prediction of the coding sequences of unidentified human genes. XVIII. The complete sequences of 100 new cDNA clones from brain which code for large proteins in vitro.</title>
        <authorList>
            <person name="Nagase T."/>
            <person name="Kikuno R."/>
            <person name="Nakayama M."/>
            <person name="Hirosawa M."/>
            <person name="Ohara O."/>
        </authorList>
    </citation>
    <scope>NUCLEOTIDE SEQUENCE [LARGE SCALE MRNA] (ISOFORM 2)</scope>
    <source>
        <tissue>Brain</tissue>
    </source>
</reference>
<reference key="3">
    <citation type="journal article" date="2008" name="Proc. Natl. Acad. Sci. U.S.A.">
        <title>A quantitative atlas of mitotic phosphorylation.</title>
        <authorList>
            <person name="Dephoure N."/>
            <person name="Zhou C."/>
            <person name="Villen J."/>
            <person name="Beausoleil S.A."/>
            <person name="Bakalarski C.E."/>
            <person name="Elledge S.J."/>
            <person name="Gygi S.P."/>
        </authorList>
    </citation>
    <scope>PHOSPHORYLATION [LARGE SCALE ANALYSIS] AT THR-995</scope>
    <scope>IDENTIFICATION BY MASS SPECTROMETRY [LARGE SCALE ANALYSIS]</scope>
    <source>
        <tissue>Cervix carcinoma</tissue>
    </source>
</reference>